<protein>
    <recommendedName>
        <fullName evidence="1">3-isopropylmalate dehydratase large subunit</fullName>
        <ecNumber evidence="1">4.2.1.33</ecNumber>
    </recommendedName>
    <alternativeName>
        <fullName evidence="1">Alpha-IPM isomerase</fullName>
        <shortName evidence="1">IPMI</shortName>
    </alternativeName>
    <alternativeName>
        <fullName evidence="1">Isopropylmalate isomerase</fullName>
    </alternativeName>
</protein>
<proteinExistence type="inferred from homology"/>
<accession>B7I4E1</accession>
<sequence>MAGKTLYDKLWDDHVVTQRDDGSCLLYIDRHLLHEVTSPQAFEGLQLAGRQPWRLSANVATPDHNVPTSKKERDQGIAGIEDDTSRIQVQTLDDNCKAFYIVEFGINDIRQGIVHVVGPEQGLTLPGMTVVCGDSHTATHGAFGCLAHGIGTSEVEHVLATQCLVQKKSKNMLVRVDGVLGKGVTPKDVVLAIIGKIGTAGGTGYAIEFGGQVFRDMSIEGRMTVCNMAIEAGARVGMVAVDDKTIEYVKGRSYAPKGEQWEQAVAYWNTLHSDDDAVFDAVVELNGAEIEPQVSWGTSPEMVIPVSKAVPTLEQAKDDVQRNDWTRAYQYMGLNAGQALADIQLDRVFIGSCTNSRIEDIRAAAEVVKGRKVAPSIKQAMIVPGSGLVKQQAEKEGLDKIFLEAGFEWREPGCSMCLAMNADKLQPGEHCASTSNRNFEGRQGNGGRTHLVSPAMAAAAAIAGHFVDVRSF</sequence>
<gene>
    <name evidence="1" type="primary">leuC</name>
    <name type="ordered locus">AB57_0494</name>
</gene>
<name>LEUC_ACIB5</name>
<keyword id="KW-0004">4Fe-4S</keyword>
<keyword id="KW-0028">Amino-acid biosynthesis</keyword>
<keyword id="KW-0100">Branched-chain amino acid biosynthesis</keyword>
<keyword id="KW-0408">Iron</keyword>
<keyword id="KW-0411">Iron-sulfur</keyword>
<keyword id="KW-0432">Leucine biosynthesis</keyword>
<keyword id="KW-0456">Lyase</keyword>
<keyword id="KW-0479">Metal-binding</keyword>
<feature type="chain" id="PRO_1000135655" description="3-isopropylmalate dehydratase large subunit">
    <location>
        <begin position="1"/>
        <end position="472"/>
    </location>
</feature>
<feature type="binding site" evidence="1">
    <location>
        <position position="353"/>
    </location>
    <ligand>
        <name>[4Fe-4S] cluster</name>
        <dbReference type="ChEBI" id="CHEBI:49883"/>
    </ligand>
</feature>
<feature type="binding site" evidence="1">
    <location>
        <position position="414"/>
    </location>
    <ligand>
        <name>[4Fe-4S] cluster</name>
        <dbReference type="ChEBI" id="CHEBI:49883"/>
    </ligand>
</feature>
<feature type="binding site" evidence="1">
    <location>
        <position position="417"/>
    </location>
    <ligand>
        <name>[4Fe-4S] cluster</name>
        <dbReference type="ChEBI" id="CHEBI:49883"/>
    </ligand>
</feature>
<evidence type="ECO:0000255" key="1">
    <source>
        <dbReference type="HAMAP-Rule" id="MF_01026"/>
    </source>
</evidence>
<organism>
    <name type="scientific">Acinetobacter baumannii (strain AB0057)</name>
    <dbReference type="NCBI Taxonomy" id="480119"/>
    <lineage>
        <taxon>Bacteria</taxon>
        <taxon>Pseudomonadati</taxon>
        <taxon>Pseudomonadota</taxon>
        <taxon>Gammaproteobacteria</taxon>
        <taxon>Moraxellales</taxon>
        <taxon>Moraxellaceae</taxon>
        <taxon>Acinetobacter</taxon>
        <taxon>Acinetobacter calcoaceticus/baumannii complex</taxon>
    </lineage>
</organism>
<reference key="1">
    <citation type="journal article" date="2008" name="J. Bacteriol.">
        <title>Comparative genome sequence analysis of multidrug-resistant Acinetobacter baumannii.</title>
        <authorList>
            <person name="Adams M.D."/>
            <person name="Goglin K."/>
            <person name="Molyneaux N."/>
            <person name="Hujer K.M."/>
            <person name="Lavender H."/>
            <person name="Jamison J.J."/>
            <person name="MacDonald I.J."/>
            <person name="Martin K.M."/>
            <person name="Russo T."/>
            <person name="Campagnari A.A."/>
            <person name="Hujer A.M."/>
            <person name="Bonomo R.A."/>
            <person name="Gill S.R."/>
        </authorList>
    </citation>
    <scope>NUCLEOTIDE SEQUENCE [LARGE SCALE GENOMIC DNA]</scope>
    <source>
        <strain>AB0057</strain>
    </source>
</reference>
<dbReference type="EC" id="4.2.1.33" evidence="1"/>
<dbReference type="EMBL" id="CP001182">
    <property type="protein sequence ID" value="ACJ39916.1"/>
    <property type="molecule type" value="Genomic_DNA"/>
</dbReference>
<dbReference type="RefSeq" id="WP_000907609.1">
    <property type="nucleotide sequence ID" value="NC_011586.2"/>
</dbReference>
<dbReference type="SMR" id="B7I4E1"/>
<dbReference type="KEGG" id="abn:AB57_0494"/>
<dbReference type="HOGENOM" id="CLU_006714_3_4_6"/>
<dbReference type="UniPathway" id="UPA00048">
    <property type="reaction ID" value="UER00071"/>
</dbReference>
<dbReference type="Proteomes" id="UP000007094">
    <property type="component" value="Chromosome"/>
</dbReference>
<dbReference type="GO" id="GO:0003861">
    <property type="term" value="F:3-isopropylmalate dehydratase activity"/>
    <property type="evidence" value="ECO:0007669"/>
    <property type="project" value="UniProtKB-UniRule"/>
</dbReference>
<dbReference type="GO" id="GO:0051539">
    <property type="term" value="F:4 iron, 4 sulfur cluster binding"/>
    <property type="evidence" value="ECO:0007669"/>
    <property type="project" value="UniProtKB-KW"/>
</dbReference>
<dbReference type="GO" id="GO:0046872">
    <property type="term" value="F:metal ion binding"/>
    <property type="evidence" value="ECO:0007669"/>
    <property type="project" value="UniProtKB-KW"/>
</dbReference>
<dbReference type="GO" id="GO:0009098">
    <property type="term" value="P:L-leucine biosynthetic process"/>
    <property type="evidence" value="ECO:0007669"/>
    <property type="project" value="UniProtKB-UniRule"/>
</dbReference>
<dbReference type="CDD" id="cd01583">
    <property type="entry name" value="IPMI"/>
    <property type="match status" value="1"/>
</dbReference>
<dbReference type="FunFam" id="3.30.499.10:FF:000007">
    <property type="entry name" value="3-isopropylmalate dehydratase large subunit"/>
    <property type="match status" value="1"/>
</dbReference>
<dbReference type="Gene3D" id="3.30.499.10">
    <property type="entry name" value="Aconitase, domain 3"/>
    <property type="match status" value="2"/>
</dbReference>
<dbReference type="HAMAP" id="MF_01026">
    <property type="entry name" value="LeuC_type1"/>
    <property type="match status" value="1"/>
</dbReference>
<dbReference type="InterPro" id="IPR004430">
    <property type="entry name" value="3-IsopropMal_deHydase_lsu"/>
</dbReference>
<dbReference type="InterPro" id="IPR015931">
    <property type="entry name" value="Acnase/IPM_dHydase_lsu_aba_1/3"/>
</dbReference>
<dbReference type="InterPro" id="IPR001030">
    <property type="entry name" value="Acoase/IPM_deHydtase_lsu_aba"/>
</dbReference>
<dbReference type="InterPro" id="IPR018136">
    <property type="entry name" value="Aconitase_4Fe-4S_BS"/>
</dbReference>
<dbReference type="InterPro" id="IPR036008">
    <property type="entry name" value="Aconitase_4Fe-4S_dom"/>
</dbReference>
<dbReference type="InterPro" id="IPR050067">
    <property type="entry name" value="IPM_dehydratase_rel_enz"/>
</dbReference>
<dbReference type="InterPro" id="IPR033941">
    <property type="entry name" value="IPMI_cat"/>
</dbReference>
<dbReference type="NCBIfam" id="TIGR00170">
    <property type="entry name" value="leuC"/>
    <property type="match status" value="1"/>
</dbReference>
<dbReference type="NCBIfam" id="NF004016">
    <property type="entry name" value="PRK05478.1"/>
    <property type="match status" value="1"/>
</dbReference>
<dbReference type="NCBIfam" id="NF009116">
    <property type="entry name" value="PRK12466.1"/>
    <property type="match status" value="1"/>
</dbReference>
<dbReference type="PANTHER" id="PTHR43822:SF9">
    <property type="entry name" value="3-ISOPROPYLMALATE DEHYDRATASE"/>
    <property type="match status" value="1"/>
</dbReference>
<dbReference type="PANTHER" id="PTHR43822">
    <property type="entry name" value="HOMOACONITASE, MITOCHONDRIAL-RELATED"/>
    <property type="match status" value="1"/>
</dbReference>
<dbReference type="Pfam" id="PF00330">
    <property type="entry name" value="Aconitase"/>
    <property type="match status" value="1"/>
</dbReference>
<dbReference type="PRINTS" id="PR00415">
    <property type="entry name" value="ACONITASE"/>
</dbReference>
<dbReference type="SUPFAM" id="SSF53732">
    <property type="entry name" value="Aconitase iron-sulfur domain"/>
    <property type="match status" value="1"/>
</dbReference>
<dbReference type="PROSITE" id="PS00450">
    <property type="entry name" value="ACONITASE_1"/>
    <property type="match status" value="1"/>
</dbReference>
<dbReference type="PROSITE" id="PS01244">
    <property type="entry name" value="ACONITASE_2"/>
    <property type="match status" value="1"/>
</dbReference>
<comment type="function">
    <text evidence="1">Catalyzes the isomerization between 2-isopropylmalate and 3-isopropylmalate, via the formation of 2-isopropylmaleate.</text>
</comment>
<comment type="catalytic activity">
    <reaction evidence="1">
        <text>(2R,3S)-3-isopropylmalate = (2S)-2-isopropylmalate</text>
        <dbReference type="Rhea" id="RHEA:32287"/>
        <dbReference type="ChEBI" id="CHEBI:1178"/>
        <dbReference type="ChEBI" id="CHEBI:35121"/>
        <dbReference type="EC" id="4.2.1.33"/>
    </reaction>
</comment>
<comment type="cofactor">
    <cofactor evidence="1">
        <name>[4Fe-4S] cluster</name>
        <dbReference type="ChEBI" id="CHEBI:49883"/>
    </cofactor>
    <text evidence="1">Binds 1 [4Fe-4S] cluster per subunit.</text>
</comment>
<comment type="pathway">
    <text evidence="1">Amino-acid biosynthesis; L-leucine biosynthesis; L-leucine from 3-methyl-2-oxobutanoate: step 2/4.</text>
</comment>
<comment type="subunit">
    <text evidence="1">Heterodimer of LeuC and LeuD.</text>
</comment>
<comment type="similarity">
    <text evidence="1">Belongs to the aconitase/IPM isomerase family. LeuC type 1 subfamily.</text>
</comment>